<name>LPXB1_LEGPA</name>
<protein>
    <recommendedName>
        <fullName evidence="1">Lipid-A-disaccharide synthase 1</fullName>
        <ecNumber evidence="1">2.4.1.182</ecNumber>
    </recommendedName>
</protein>
<feature type="chain" id="PRO_0000255192" description="Lipid-A-disaccharide synthase 1">
    <location>
        <begin position="1"/>
        <end position="384"/>
    </location>
</feature>
<dbReference type="EC" id="2.4.1.182" evidence="1"/>
<dbReference type="EMBL" id="CR628336">
    <property type="protein sequence ID" value="CAH12476.1"/>
    <property type="molecule type" value="Genomic_DNA"/>
</dbReference>
<dbReference type="SMR" id="Q5X5J5"/>
<dbReference type="CAZy" id="GT19">
    <property type="family name" value="Glycosyltransferase Family 19"/>
</dbReference>
<dbReference type="KEGG" id="lpp:lpp1325"/>
<dbReference type="LegioList" id="lpp1325"/>
<dbReference type="HOGENOM" id="CLU_036577_3_1_6"/>
<dbReference type="BRENDA" id="2.4.1.182">
    <property type="organism ID" value="2943"/>
</dbReference>
<dbReference type="UniPathway" id="UPA00973"/>
<dbReference type="GO" id="GO:0016020">
    <property type="term" value="C:membrane"/>
    <property type="evidence" value="ECO:0007669"/>
    <property type="project" value="GOC"/>
</dbReference>
<dbReference type="GO" id="GO:0008915">
    <property type="term" value="F:lipid-A-disaccharide synthase activity"/>
    <property type="evidence" value="ECO:0007669"/>
    <property type="project" value="UniProtKB-UniRule"/>
</dbReference>
<dbReference type="GO" id="GO:0005543">
    <property type="term" value="F:phospholipid binding"/>
    <property type="evidence" value="ECO:0007669"/>
    <property type="project" value="TreeGrafter"/>
</dbReference>
<dbReference type="GO" id="GO:0009245">
    <property type="term" value="P:lipid A biosynthetic process"/>
    <property type="evidence" value="ECO:0007669"/>
    <property type="project" value="UniProtKB-UniRule"/>
</dbReference>
<dbReference type="HAMAP" id="MF_00392">
    <property type="entry name" value="LpxB"/>
    <property type="match status" value="1"/>
</dbReference>
<dbReference type="InterPro" id="IPR003835">
    <property type="entry name" value="Glyco_trans_19"/>
</dbReference>
<dbReference type="NCBIfam" id="TIGR00215">
    <property type="entry name" value="lpxB"/>
    <property type="match status" value="1"/>
</dbReference>
<dbReference type="PANTHER" id="PTHR30372">
    <property type="entry name" value="LIPID-A-DISACCHARIDE SYNTHASE"/>
    <property type="match status" value="1"/>
</dbReference>
<dbReference type="PANTHER" id="PTHR30372:SF4">
    <property type="entry name" value="LIPID-A-DISACCHARIDE SYNTHASE, MITOCHONDRIAL-RELATED"/>
    <property type="match status" value="1"/>
</dbReference>
<dbReference type="Pfam" id="PF02684">
    <property type="entry name" value="LpxB"/>
    <property type="match status" value="1"/>
</dbReference>
<dbReference type="SUPFAM" id="SSF53756">
    <property type="entry name" value="UDP-Glycosyltransferase/glycogen phosphorylase"/>
    <property type="match status" value="1"/>
</dbReference>
<accession>Q5X5J5</accession>
<evidence type="ECO:0000255" key="1">
    <source>
        <dbReference type="HAMAP-Rule" id="MF_00392"/>
    </source>
</evidence>
<comment type="function">
    <text evidence="1">Condensation of UDP-2,3-diacylglucosamine and 2,3-diacylglucosamine-1-phosphate to form lipid A disaccharide, a precursor of lipid A, a phosphorylated glycolipid that anchors the lipopolysaccharide to the outer membrane of the cell.</text>
</comment>
<comment type="catalytic activity">
    <reaction evidence="1">
        <text>a lipid X + a UDP-2-N,3-O-bis[(3R)-3-hydroxyacyl]-alpha-D-glucosamine = a lipid A disaccharide + UDP + H(+)</text>
        <dbReference type="Rhea" id="RHEA:67828"/>
        <dbReference type="ChEBI" id="CHEBI:15378"/>
        <dbReference type="ChEBI" id="CHEBI:58223"/>
        <dbReference type="ChEBI" id="CHEBI:137748"/>
        <dbReference type="ChEBI" id="CHEBI:176338"/>
        <dbReference type="ChEBI" id="CHEBI:176343"/>
        <dbReference type="EC" id="2.4.1.182"/>
    </reaction>
</comment>
<comment type="pathway">
    <text evidence="1">Bacterial outer membrane biogenesis; LPS lipid A biosynthesis.</text>
</comment>
<comment type="similarity">
    <text evidence="1">Belongs to the LpxB family.</text>
</comment>
<keyword id="KW-0328">Glycosyltransferase</keyword>
<keyword id="KW-0441">Lipid A biosynthesis</keyword>
<keyword id="KW-0444">Lipid biosynthesis</keyword>
<keyword id="KW-0443">Lipid metabolism</keyword>
<keyword id="KW-0808">Transferase</keyword>
<reference key="1">
    <citation type="journal article" date="2004" name="Nat. Genet.">
        <title>Evidence in the Legionella pneumophila genome for exploitation of host cell functions and high genome plasticity.</title>
        <authorList>
            <person name="Cazalet C."/>
            <person name="Rusniok C."/>
            <person name="Brueggemann H."/>
            <person name="Zidane N."/>
            <person name="Magnier A."/>
            <person name="Ma L."/>
            <person name="Tichit M."/>
            <person name="Jarraud S."/>
            <person name="Bouchier C."/>
            <person name="Vandenesch F."/>
            <person name="Kunst F."/>
            <person name="Etienne J."/>
            <person name="Glaser P."/>
            <person name="Buchrieser C."/>
        </authorList>
    </citation>
    <scope>NUCLEOTIDE SEQUENCE [LARGE SCALE GENOMIC DNA]</scope>
    <source>
        <strain>Paris</strain>
    </source>
</reference>
<sequence length="384" mass="42761">MPNASRVVIVAGEESGDHHAAELVKQLKAVYPNLKISGIGGKHLRAAGVHLISDLTRYAVTGLTEIIPFLKIFHKAFQDIKQHLSTQKPDLLILVDYPAFNLRLAKYAKKKLGLKIIYYISPQIWAWKGKRIHLIKDSIDKMAVIFPFEKTIYENAGVPVSFVGHPLVKKIASAKDKHSSRTFLGLPLDEPIIALLPGSRHSEIERHIPILVNTAKLLTLDNPKLRFVVPIAGTINPDKVKAYFSNQNLTVTFIQGQAIECMSAADFVIVASGTASLECALLEKPMCIIYKSSFLTYVAAMYFIKVKFLGLCNLLANKMMVPEFLQYDCNEIELSRYISNFHSDPNQPKSMINQLAKLKESLSSSQADCSLFDLVVAELPEKNA</sequence>
<organism>
    <name type="scientific">Legionella pneumophila (strain Paris)</name>
    <dbReference type="NCBI Taxonomy" id="297246"/>
    <lineage>
        <taxon>Bacteria</taxon>
        <taxon>Pseudomonadati</taxon>
        <taxon>Pseudomonadota</taxon>
        <taxon>Gammaproteobacteria</taxon>
        <taxon>Legionellales</taxon>
        <taxon>Legionellaceae</taxon>
        <taxon>Legionella</taxon>
    </lineage>
</organism>
<gene>
    <name evidence="1" type="primary">lpxB1</name>
    <name type="ordered locus">lpp1325</name>
</gene>
<proteinExistence type="inferred from homology"/>